<protein>
    <recommendedName>
        <fullName evidence="1">Protein Thf1</fullName>
    </recommendedName>
</protein>
<sequence length="212" mass="23522">MAERHTIADSKRAFHQAFPHVIAPLYRRIADELLVELHLLSHQATFQANSLFAVGLKTVFERFTQGYRPMEHPAALLSALCSSNGFDDEQLKQAAQHCLQDAEGHSDDAFQSWLKEQSLSDGAHYSRLMAVGLLALLEASSDESDASSLRQRAVKLSVDLGLPAERVEKDLTVFSSNSERMEQAVELMQETLAADRRKKEKRLAEAAESTAG</sequence>
<evidence type="ECO:0000255" key="1">
    <source>
        <dbReference type="HAMAP-Rule" id="MF_01843"/>
    </source>
</evidence>
<feature type="chain" id="PRO_0000235223" description="Protein Thf1">
    <location>
        <begin position="1"/>
        <end position="212"/>
    </location>
</feature>
<feature type="coiled-coil region" evidence="1">
    <location>
        <begin position="179"/>
        <end position="201"/>
    </location>
</feature>
<name>THF1_PARMW</name>
<keyword id="KW-0175">Coiled coil</keyword>
<proteinExistence type="inferred from homology"/>
<reference key="1">
    <citation type="journal article" date="2003" name="Nature">
        <title>The genome of a motile marine Synechococcus.</title>
        <authorList>
            <person name="Palenik B."/>
            <person name="Brahamsha B."/>
            <person name="Larimer F.W."/>
            <person name="Land M.L."/>
            <person name="Hauser L."/>
            <person name="Chain P."/>
            <person name="Lamerdin J.E."/>
            <person name="Regala W."/>
            <person name="Allen E.E."/>
            <person name="McCarren J."/>
            <person name="Paulsen I.T."/>
            <person name="Dufresne A."/>
            <person name="Partensky F."/>
            <person name="Webb E.A."/>
            <person name="Waterbury J."/>
        </authorList>
    </citation>
    <scope>NUCLEOTIDE SEQUENCE [LARGE SCALE GENOMIC DNA]</scope>
    <source>
        <strain>WH8102</strain>
    </source>
</reference>
<accession>Q7U6N6</accession>
<dbReference type="EMBL" id="BX569692">
    <property type="protein sequence ID" value="CAE07817.1"/>
    <property type="molecule type" value="Genomic_DNA"/>
</dbReference>
<dbReference type="RefSeq" id="WP_011128166.1">
    <property type="nucleotide sequence ID" value="NC_005070.1"/>
</dbReference>
<dbReference type="SMR" id="Q7U6N6"/>
<dbReference type="STRING" id="84588.SYNW1302"/>
<dbReference type="KEGG" id="syw:SYNW1302"/>
<dbReference type="eggNOG" id="ENOG502Z86M">
    <property type="taxonomic scope" value="Bacteria"/>
</dbReference>
<dbReference type="HOGENOM" id="CLU_079763_1_0_3"/>
<dbReference type="Proteomes" id="UP000001422">
    <property type="component" value="Chromosome"/>
</dbReference>
<dbReference type="GO" id="GO:0030096">
    <property type="term" value="C:plasma membrane-derived thylakoid photosystem II"/>
    <property type="evidence" value="ECO:0007669"/>
    <property type="project" value="TreeGrafter"/>
</dbReference>
<dbReference type="GO" id="GO:0010207">
    <property type="term" value="P:photosystem II assembly"/>
    <property type="evidence" value="ECO:0007669"/>
    <property type="project" value="InterPro"/>
</dbReference>
<dbReference type="HAMAP" id="MF_01843">
    <property type="entry name" value="Thf1"/>
    <property type="match status" value="1"/>
</dbReference>
<dbReference type="InterPro" id="IPR017499">
    <property type="entry name" value="Thf1"/>
</dbReference>
<dbReference type="NCBIfam" id="TIGR03060">
    <property type="entry name" value="PS_II_psb29"/>
    <property type="match status" value="1"/>
</dbReference>
<dbReference type="PANTHER" id="PTHR34793">
    <property type="entry name" value="PROTEIN THYLAKOID FORMATION 1, CHLOROPLASTIC"/>
    <property type="match status" value="1"/>
</dbReference>
<dbReference type="PANTHER" id="PTHR34793:SF1">
    <property type="entry name" value="PROTEIN THYLAKOID FORMATION 1, CHLOROPLASTIC"/>
    <property type="match status" value="1"/>
</dbReference>
<dbReference type="Pfam" id="PF11264">
    <property type="entry name" value="ThylakoidFormat"/>
    <property type="match status" value="1"/>
</dbReference>
<organism>
    <name type="scientific">Parasynechococcus marenigrum (strain WH8102)</name>
    <dbReference type="NCBI Taxonomy" id="84588"/>
    <lineage>
        <taxon>Bacteria</taxon>
        <taxon>Bacillati</taxon>
        <taxon>Cyanobacteriota</taxon>
        <taxon>Cyanophyceae</taxon>
        <taxon>Synechococcales</taxon>
        <taxon>Prochlorococcaceae</taxon>
        <taxon>Parasynechococcus</taxon>
        <taxon>Parasynechococcus marenigrum</taxon>
    </lineage>
</organism>
<gene>
    <name evidence="1" type="primary">thf1</name>
    <name type="ordered locus">SYNW1302</name>
</gene>
<comment type="function">
    <text evidence="1">May be involved in photosynthetic membrane biogenesis.</text>
</comment>
<comment type="similarity">
    <text evidence="1">Belongs to the THF1 family.</text>
</comment>